<reference key="1">
    <citation type="journal article" date="1997" name="Nature">
        <title>The complete genome sequence of the hyperthermophilic, sulphate-reducing archaeon Archaeoglobus fulgidus.</title>
        <authorList>
            <person name="Klenk H.-P."/>
            <person name="Clayton R.A."/>
            <person name="Tomb J.-F."/>
            <person name="White O."/>
            <person name="Nelson K.E."/>
            <person name="Ketchum K.A."/>
            <person name="Dodson R.J."/>
            <person name="Gwinn M.L."/>
            <person name="Hickey E.K."/>
            <person name="Peterson J.D."/>
            <person name="Richardson D.L."/>
            <person name="Kerlavage A.R."/>
            <person name="Graham D.E."/>
            <person name="Kyrpides N.C."/>
            <person name="Fleischmann R.D."/>
            <person name="Quackenbush J."/>
            <person name="Lee N.H."/>
            <person name="Sutton G.G."/>
            <person name="Gill S.R."/>
            <person name="Kirkness E.F."/>
            <person name="Dougherty B.A."/>
            <person name="McKenney K."/>
            <person name="Adams M.D."/>
            <person name="Loftus B.J."/>
            <person name="Peterson S.N."/>
            <person name="Reich C.I."/>
            <person name="McNeil L.K."/>
            <person name="Badger J.H."/>
            <person name="Glodek A."/>
            <person name="Zhou L."/>
            <person name="Overbeek R."/>
            <person name="Gocayne J.D."/>
            <person name="Weidman J.F."/>
            <person name="McDonald L.A."/>
            <person name="Utterback T.R."/>
            <person name="Cotton M.D."/>
            <person name="Spriggs T."/>
            <person name="Artiach P."/>
            <person name="Kaine B.P."/>
            <person name="Sykes S.M."/>
            <person name="Sadow P.W."/>
            <person name="D'Andrea K.P."/>
            <person name="Bowman C."/>
            <person name="Fujii C."/>
            <person name="Garland S.A."/>
            <person name="Mason T.M."/>
            <person name="Olsen G.J."/>
            <person name="Fraser C.M."/>
            <person name="Smith H.O."/>
            <person name="Woese C.R."/>
            <person name="Venter J.C."/>
        </authorList>
    </citation>
    <scope>NUCLEOTIDE SEQUENCE [LARGE SCALE GENOMIC DNA]</scope>
    <source>
        <strain>ATCC 49558 / DSM 4304 / JCM 9628 / NBRC 100126 / VC-16</strain>
    </source>
</reference>
<protein>
    <recommendedName>
        <fullName>Uncharacterized protein AF_0759</fullName>
    </recommendedName>
</protein>
<organism>
    <name type="scientific">Archaeoglobus fulgidus (strain ATCC 49558 / DSM 4304 / JCM 9628 / NBRC 100126 / VC-16)</name>
    <dbReference type="NCBI Taxonomy" id="224325"/>
    <lineage>
        <taxon>Archaea</taxon>
        <taxon>Methanobacteriati</taxon>
        <taxon>Methanobacteriota</taxon>
        <taxon>Archaeoglobi</taxon>
        <taxon>Archaeoglobales</taxon>
        <taxon>Archaeoglobaceae</taxon>
        <taxon>Archaeoglobus</taxon>
    </lineage>
</organism>
<dbReference type="EMBL" id="AE000782">
    <property type="protein sequence ID" value="AAB90486.1"/>
    <property type="molecule type" value="Genomic_DNA"/>
</dbReference>
<dbReference type="PIR" id="G69344">
    <property type="entry name" value="G69344"/>
</dbReference>
<dbReference type="SMR" id="O29499"/>
<dbReference type="STRING" id="224325.AF_0759"/>
<dbReference type="PaxDb" id="224325-AF_0759"/>
<dbReference type="EnsemblBacteria" id="AAB90486">
    <property type="protein sequence ID" value="AAB90486"/>
    <property type="gene ID" value="AF_0759"/>
</dbReference>
<dbReference type="KEGG" id="afu:AF_0759"/>
<dbReference type="eggNOG" id="arCOG02911">
    <property type="taxonomic scope" value="Archaea"/>
</dbReference>
<dbReference type="HOGENOM" id="CLU_1060060_0_0_2"/>
<dbReference type="Proteomes" id="UP000002199">
    <property type="component" value="Chromosome"/>
</dbReference>
<dbReference type="GO" id="GO:0016020">
    <property type="term" value="C:membrane"/>
    <property type="evidence" value="ECO:0007669"/>
    <property type="project" value="UniProtKB-SubCell"/>
</dbReference>
<dbReference type="InterPro" id="IPR055713">
    <property type="entry name" value="DUF7289"/>
</dbReference>
<dbReference type="Pfam" id="PF23960">
    <property type="entry name" value="DUF7289"/>
    <property type="match status" value="1"/>
</dbReference>
<comment type="subcellular location">
    <subcellularLocation>
        <location evidence="2">Membrane</location>
        <topology evidence="2">Single-pass membrane protein</topology>
    </subcellularLocation>
</comment>
<accession>O29499</accession>
<keyword id="KW-0472">Membrane</keyword>
<keyword id="KW-1185">Reference proteome</keyword>
<keyword id="KW-0812">Transmembrane</keyword>
<keyword id="KW-1133">Transmembrane helix</keyword>
<sequence length="262" mass="29034">MLYHLNNNGVSEVVGALLTVVVIVTAAGIIYVISHPVIANSIDNVNYQNAVKNMAEIKEIVQRMKYGSEVATSKVIQLNGGSMSNARFFNFTVFTTELPPGLQGNPNPNINAIIHAAHDIEVDWYTHTLNIEIAGREIVFESGIFVKEYGSVNPIPISEPDIIVTNDTLYLSIYDFIGDYSAGGQKITINFKHNFTTIFSNVTSFELKSEFCDIWKKSFEKALNDVPSKPADFEDDDCIDNTIKIKKASGDISIIFTRVEVT</sequence>
<evidence type="ECO:0000255" key="1"/>
<evidence type="ECO:0000305" key="2"/>
<gene>
    <name type="ordered locus">AF_0759</name>
</gene>
<name>Y759_ARCFU</name>
<proteinExistence type="predicted"/>
<feature type="chain" id="PRO_0000127918" description="Uncharacterized protein AF_0759">
    <location>
        <begin position="1"/>
        <end position="262"/>
    </location>
</feature>
<feature type="transmembrane region" description="Helical" evidence="1">
    <location>
        <begin position="13"/>
        <end position="35"/>
    </location>
</feature>